<dbReference type="EC" id="6.1.1.16" evidence="1"/>
<dbReference type="EMBL" id="CP000029">
    <property type="protein sequence ID" value="AAW53553.1"/>
    <property type="molecule type" value="Genomic_DNA"/>
</dbReference>
<dbReference type="RefSeq" id="WP_002445731.1">
    <property type="nucleotide sequence ID" value="NC_002976.3"/>
</dbReference>
<dbReference type="SMR" id="Q5HRM3"/>
<dbReference type="STRING" id="176279.SERP0170"/>
<dbReference type="KEGG" id="ser:SERP0170"/>
<dbReference type="eggNOG" id="COG0215">
    <property type="taxonomic scope" value="Bacteria"/>
</dbReference>
<dbReference type="HOGENOM" id="CLU_013528_0_1_9"/>
<dbReference type="Proteomes" id="UP000000531">
    <property type="component" value="Chromosome"/>
</dbReference>
<dbReference type="GO" id="GO:0005829">
    <property type="term" value="C:cytosol"/>
    <property type="evidence" value="ECO:0007669"/>
    <property type="project" value="TreeGrafter"/>
</dbReference>
<dbReference type="GO" id="GO:0005524">
    <property type="term" value="F:ATP binding"/>
    <property type="evidence" value="ECO:0007669"/>
    <property type="project" value="UniProtKB-UniRule"/>
</dbReference>
<dbReference type="GO" id="GO:0004817">
    <property type="term" value="F:cysteine-tRNA ligase activity"/>
    <property type="evidence" value="ECO:0007669"/>
    <property type="project" value="UniProtKB-UniRule"/>
</dbReference>
<dbReference type="GO" id="GO:0008270">
    <property type="term" value="F:zinc ion binding"/>
    <property type="evidence" value="ECO:0007669"/>
    <property type="project" value="UniProtKB-UniRule"/>
</dbReference>
<dbReference type="GO" id="GO:0006423">
    <property type="term" value="P:cysteinyl-tRNA aminoacylation"/>
    <property type="evidence" value="ECO:0007669"/>
    <property type="project" value="UniProtKB-UniRule"/>
</dbReference>
<dbReference type="CDD" id="cd00672">
    <property type="entry name" value="CysRS_core"/>
    <property type="match status" value="1"/>
</dbReference>
<dbReference type="FunFam" id="3.40.50.620:FF:000009">
    <property type="entry name" value="Cysteine--tRNA ligase"/>
    <property type="match status" value="1"/>
</dbReference>
<dbReference type="Gene3D" id="1.20.120.1910">
    <property type="entry name" value="Cysteine-tRNA ligase, C-terminal anti-codon recognition domain"/>
    <property type="match status" value="1"/>
</dbReference>
<dbReference type="Gene3D" id="3.40.50.620">
    <property type="entry name" value="HUPs"/>
    <property type="match status" value="1"/>
</dbReference>
<dbReference type="HAMAP" id="MF_00041">
    <property type="entry name" value="Cys_tRNA_synth"/>
    <property type="match status" value="1"/>
</dbReference>
<dbReference type="InterPro" id="IPR015803">
    <property type="entry name" value="Cys-tRNA-ligase"/>
</dbReference>
<dbReference type="InterPro" id="IPR015273">
    <property type="entry name" value="Cys-tRNA-synt_Ia_DALR"/>
</dbReference>
<dbReference type="InterPro" id="IPR024909">
    <property type="entry name" value="Cys-tRNA/MSH_ligase"/>
</dbReference>
<dbReference type="InterPro" id="IPR056411">
    <property type="entry name" value="CysS_C"/>
</dbReference>
<dbReference type="InterPro" id="IPR014729">
    <property type="entry name" value="Rossmann-like_a/b/a_fold"/>
</dbReference>
<dbReference type="InterPro" id="IPR032678">
    <property type="entry name" value="tRNA-synt_1_cat_dom"/>
</dbReference>
<dbReference type="InterPro" id="IPR009080">
    <property type="entry name" value="tRNAsynth_Ia_anticodon-bd"/>
</dbReference>
<dbReference type="NCBIfam" id="TIGR00435">
    <property type="entry name" value="cysS"/>
    <property type="match status" value="1"/>
</dbReference>
<dbReference type="PANTHER" id="PTHR10890:SF3">
    <property type="entry name" value="CYSTEINE--TRNA LIGASE, CYTOPLASMIC"/>
    <property type="match status" value="1"/>
</dbReference>
<dbReference type="PANTHER" id="PTHR10890">
    <property type="entry name" value="CYSTEINYL-TRNA SYNTHETASE"/>
    <property type="match status" value="1"/>
</dbReference>
<dbReference type="Pfam" id="PF23493">
    <property type="entry name" value="CysS_C"/>
    <property type="match status" value="1"/>
</dbReference>
<dbReference type="Pfam" id="PF09190">
    <property type="entry name" value="DALR_2"/>
    <property type="match status" value="1"/>
</dbReference>
<dbReference type="Pfam" id="PF01406">
    <property type="entry name" value="tRNA-synt_1e"/>
    <property type="match status" value="1"/>
</dbReference>
<dbReference type="PRINTS" id="PR00983">
    <property type="entry name" value="TRNASYNTHCYS"/>
</dbReference>
<dbReference type="SMART" id="SM00840">
    <property type="entry name" value="DALR_2"/>
    <property type="match status" value="1"/>
</dbReference>
<dbReference type="SUPFAM" id="SSF47323">
    <property type="entry name" value="Anticodon-binding domain of a subclass of class I aminoacyl-tRNA synthetases"/>
    <property type="match status" value="1"/>
</dbReference>
<dbReference type="SUPFAM" id="SSF52374">
    <property type="entry name" value="Nucleotidylyl transferase"/>
    <property type="match status" value="1"/>
</dbReference>
<name>SYC_STAEQ</name>
<feature type="chain" id="PRO_0000159484" description="Cysteine--tRNA ligase">
    <location>
        <begin position="1"/>
        <end position="466"/>
    </location>
</feature>
<feature type="short sequence motif" description="'HIGH' region">
    <location>
        <begin position="30"/>
        <end position="40"/>
    </location>
</feature>
<feature type="short sequence motif" description="'KMSKS' region">
    <location>
        <begin position="265"/>
        <end position="269"/>
    </location>
</feature>
<feature type="binding site" evidence="1">
    <location>
        <position position="28"/>
    </location>
    <ligand>
        <name>Zn(2+)</name>
        <dbReference type="ChEBI" id="CHEBI:29105"/>
    </ligand>
</feature>
<feature type="binding site" evidence="1">
    <location>
        <position position="208"/>
    </location>
    <ligand>
        <name>Zn(2+)</name>
        <dbReference type="ChEBI" id="CHEBI:29105"/>
    </ligand>
</feature>
<feature type="binding site" evidence="1">
    <location>
        <position position="233"/>
    </location>
    <ligand>
        <name>Zn(2+)</name>
        <dbReference type="ChEBI" id="CHEBI:29105"/>
    </ligand>
</feature>
<feature type="binding site" evidence="1">
    <location>
        <position position="237"/>
    </location>
    <ligand>
        <name>Zn(2+)</name>
        <dbReference type="ChEBI" id="CHEBI:29105"/>
    </ligand>
</feature>
<feature type="binding site" evidence="1">
    <location>
        <position position="268"/>
    </location>
    <ligand>
        <name>ATP</name>
        <dbReference type="ChEBI" id="CHEBI:30616"/>
    </ligand>
</feature>
<gene>
    <name evidence="1" type="primary">cysS</name>
    <name type="ordered locus">SERP0170</name>
</gene>
<sequence length="466" mass="53930">MITLYNTLTRRKETFEPIEPGKVKMYVCGPTVYNYIHIGNARPAINYDVVRRYFEYKGYEVIYVSNFTDVDDKLINRSKELNESVPEIAEKYIKAFYEDVGALNVKKATSNPRVMHHMGEIIDFIKELVDEGYAYESDGDVYFRTRQFDGYGKLSHQSLDDLKVGARIEAGEQKEDALDFTLWKKAKPGEISWNSPFGKGRPGWHIECSVMAYHELGSTIDIHAGGSDLQFPHHENEIAQSEAHNHAPFANYWMHNGFINIDNEKMSKSLGNFILVHDIIKEVDPDVLRFFMISVHYRSPINYNLELVGAARSGLERIRNSYKLIEEREQIASDLEEQSEYIQQIDKILNQFETVMDDDFNTANAVTAWYDLAKLANKYVLENTTSTKVLNRFKEVYSIFSDVLGVPLKSKETEELLDEDIEQLIEERNEARKNKDFARADEIRDMLKARHIILEDTPQGVRFKRG</sequence>
<comment type="catalytic activity">
    <reaction evidence="1">
        <text>tRNA(Cys) + L-cysteine + ATP = L-cysteinyl-tRNA(Cys) + AMP + diphosphate</text>
        <dbReference type="Rhea" id="RHEA:17773"/>
        <dbReference type="Rhea" id="RHEA-COMP:9661"/>
        <dbReference type="Rhea" id="RHEA-COMP:9679"/>
        <dbReference type="ChEBI" id="CHEBI:30616"/>
        <dbReference type="ChEBI" id="CHEBI:33019"/>
        <dbReference type="ChEBI" id="CHEBI:35235"/>
        <dbReference type="ChEBI" id="CHEBI:78442"/>
        <dbReference type="ChEBI" id="CHEBI:78517"/>
        <dbReference type="ChEBI" id="CHEBI:456215"/>
        <dbReference type="EC" id="6.1.1.16"/>
    </reaction>
</comment>
<comment type="cofactor">
    <cofactor evidence="1">
        <name>Zn(2+)</name>
        <dbReference type="ChEBI" id="CHEBI:29105"/>
    </cofactor>
    <text evidence="1">Binds 1 zinc ion per subunit.</text>
</comment>
<comment type="subunit">
    <text evidence="1">Monomer.</text>
</comment>
<comment type="subcellular location">
    <subcellularLocation>
        <location evidence="1">Cytoplasm</location>
    </subcellularLocation>
</comment>
<comment type="similarity">
    <text evidence="1">Belongs to the class-I aminoacyl-tRNA synthetase family.</text>
</comment>
<keyword id="KW-0030">Aminoacyl-tRNA synthetase</keyword>
<keyword id="KW-0067">ATP-binding</keyword>
<keyword id="KW-0963">Cytoplasm</keyword>
<keyword id="KW-0436">Ligase</keyword>
<keyword id="KW-0479">Metal-binding</keyword>
<keyword id="KW-0547">Nucleotide-binding</keyword>
<keyword id="KW-0648">Protein biosynthesis</keyword>
<keyword id="KW-1185">Reference proteome</keyword>
<keyword id="KW-0862">Zinc</keyword>
<protein>
    <recommendedName>
        <fullName evidence="1">Cysteine--tRNA ligase</fullName>
        <ecNumber evidence="1">6.1.1.16</ecNumber>
    </recommendedName>
    <alternativeName>
        <fullName evidence="1">Cysteinyl-tRNA synthetase</fullName>
        <shortName evidence="1">CysRS</shortName>
    </alternativeName>
</protein>
<evidence type="ECO:0000255" key="1">
    <source>
        <dbReference type="HAMAP-Rule" id="MF_00041"/>
    </source>
</evidence>
<organism>
    <name type="scientific">Staphylococcus epidermidis (strain ATCC 35984 / DSM 28319 / BCRC 17069 / CCUG 31568 / BM 3577 / RP62A)</name>
    <dbReference type="NCBI Taxonomy" id="176279"/>
    <lineage>
        <taxon>Bacteria</taxon>
        <taxon>Bacillati</taxon>
        <taxon>Bacillota</taxon>
        <taxon>Bacilli</taxon>
        <taxon>Bacillales</taxon>
        <taxon>Staphylococcaceae</taxon>
        <taxon>Staphylococcus</taxon>
    </lineage>
</organism>
<proteinExistence type="inferred from homology"/>
<reference key="1">
    <citation type="journal article" date="2005" name="J. Bacteriol.">
        <title>Insights on evolution of virulence and resistance from the complete genome analysis of an early methicillin-resistant Staphylococcus aureus strain and a biofilm-producing methicillin-resistant Staphylococcus epidermidis strain.</title>
        <authorList>
            <person name="Gill S.R."/>
            <person name="Fouts D.E."/>
            <person name="Archer G.L."/>
            <person name="Mongodin E.F."/>
            <person name="DeBoy R.T."/>
            <person name="Ravel J."/>
            <person name="Paulsen I.T."/>
            <person name="Kolonay J.F."/>
            <person name="Brinkac L.M."/>
            <person name="Beanan M.J."/>
            <person name="Dodson R.J."/>
            <person name="Daugherty S.C."/>
            <person name="Madupu R."/>
            <person name="Angiuoli S.V."/>
            <person name="Durkin A.S."/>
            <person name="Haft D.H."/>
            <person name="Vamathevan J.J."/>
            <person name="Khouri H."/>
            <person name="Utterback T.R."/>
            <person name="Lee C."/>
            <person name="Dimitrov G."/>
            <person name="Jiang L."/>
            <person name="Qin H."/>
            <person name="Weidman J."/>
            <person name="Tran K."/>
            <person name="Kang K.H."/>
            <person name="Hance I.R."/>
            <person name="Nelson K.E."/>
            <person name="Fraser C.M."/>
        </authorList>
    </citation>
    <scope>NUCLEOTIDE SEQUENCE [LARGE SCALE GENOMIC DNA]</scope>
    <source>
        <strain>ATCC 35984 / DSM 28319 / BCRC 17069 / CCUG 31568 / BM 3577 / RP62A</strain>
    </source>
</reference>
<accession>Q5HRM3</accession>